<comment type="function">
    <text evidence="1 2">Heterotetrameric enzyme that catalyzes the condensation of farnesyl diphosphate (FPP), which acts as a primer, and isopentenyl diphosphate (IPP) to produce prenyl diphosphates of varying chain lengths and participates in the determination of the side chain of ubiquinone (PubMed:16262699). Supplies nona and decaprenyl diphosphate, the precursors for the side chain of the isoprenoid quinones ubiquinone-9 (Q9) and ubiquinone-10 (Q10) respectively (PubMed:16262699). The enzyme adds isopentenyl diphosphate molecules sequentially to farnesyl diphosphate with trans stereochemistry (PubMed:16262699). May play a role during cerebellar development (By similarity). May regulate mitochondrial respiratory chain function (By similarity).</text>
</comment>
<comment type="catalytic activity">
    <reaction evidence="2">
        <text>7 isopentenyl diphosphate + (2E,6E)-farnesyl diphosphate = all-trans-decaprenyl diphosphate + 7 diphosphate</text>
        <dbReference type="Rhea" id="RHEA:27802"/>
        <dbReference type="ChEBI" id="CHEBI:33019"/>
        <dbReference type="ChEBI" id="CHEBI:60721"/>
        <dbReference type="ChEBI" id="CHEBI:128769"/>
        <dbReference type="ChEBI" id="CHEBI:175763"/>
        <dbReference type="EC" id="2.5.1.91"/>
    </reaction>
    <physiologicalReaction direction="left-to-right" evidence="7">
        <dbReference type="Rhea" id="RHEA:27803"/>
    </physiologicalReaction>
</comment>
<comment type="catalytic activity">
    <reaction evidence="1">
        <text>6 isopentenyl diphosphate + (2E,6E)-farnesyl diphosphate = all-trans-nonaprenyl diphosphate + 6 diphosphate</text>
        <dbReference type="Rhea" id="RHEA:55364"/>
        <dbReference type="ChEBI" id="CHEBI:33019"/>
        <dbReference type="ChEBI" id="CHEBI:58391"/>
        <dbReference type="ChEBI" id="CHEBI:128769"/>
        <dbReference type="ChEBI" id="CHEBI:175763"/>
    </reaction>
    <physiologicalReaction direction="left-to-right" evidence="1">
        <dbReference type="Rhea" id="RHEA:55365"/>
    </physiologicalReaction>
</comment>
<comment type="pathway">
    <text evidence="2">Cofactor biosynthesis; ubiquinone biosynthesis.</text>
</comment>
<comment type="subunit">
    <text evidence="2">Heterotetramer composed of 2 PDSS1/DPS1 and 2 PDSS2/DLP1 subunits.</text>
</comment>
<comment type="subcellular location">
    <subcellularLocation>
        <location evidence="4">Mitochondrion</location>
    </subcellularLocation>
</comment>
<comment type="alternative products">
    <event type="alternative splicing"/>
    <isoform>
        <id>Q86YH6-1</id>
        <name>1</name>
        <sequence type="displayed"/>
    </isoform>
    <isoform>
        <id>Q86YH6-2</id>
        <name>2</name>
        <sequence type="described" ref="VSP_017098 VSP_017099"/>
    </isoform>
</comment>
<comment type="disease" evidence="3">
    <disease id="DI-03447">
        <name>Coenzyme Q10 deficiency, primary, 3</name>
        <acronym>COQ10D3</acronym>
        <description>A fatal encephalomyopathic form of coenzyme Q10 deficiency with nephrotic syndrome. Coenzyme Q10 deficiency is an autosomal recessive disorder with variable manifestations consistent with 5 major phenotypes. The phenotypes include an encephalomyopathic form with seizures and ataxia; a multisystem infantile form with encephalopathy, cardiomyopathy and renal failure; a predominantly cerebellar form with ataxia and cerebellar atrophy; Leigh syndrome with growth retardation; and an isolated myopathic form.</description>
        <dbReference type="MIM" id="614652"/>
    </disease>
    <text>The disease is caused by variants affecting the gene represented in this entry.</text>
</comment>
<comment type="similarity">
    <text evidence="6">Belongs to the FPP/GGPP synthase family.</text>
</comment>
<comment type="sequence caution" evidence="6">
    <conflict type="frameshift">
        <sequence resource="EMBL-CDS" id="AAH29491"/>
    </conflict>
</comment>
<protein>
    <recommendedName>
        <fullName evidence="6">All trans-polyprenyl-diphosphate synthase PDSS2</fullName>
    </recommendedName>
    <alternativeName>
        <fullName>All-trans-decaprenyl-diphosphate synthase subunit 2</fullName>
        <ecNumber evidence="2">2.5.1.91</ecNumber>
    </alternativeName>
    <alternativeName>
        <fullName>Candidate tumor suppressor protein</fullName>
    </alternativeName>
    <alternativeName>
        <fullName>Decaprenyl pyrophosphate synthase subunit 2</fullName>
    </alternativeName>
    <alternativeName>
        <fullName evidence="8">Decaprenyl-diphosphate synthase subunit 2</fullName>
    </alternativeName>
    <alternativeName>
        <fullName evidence="1">Solanesyl-diphosphate synthase subunit 2</fullName>
    </alternativeName>
</protein>
<sequence>MNFRQLLLHLPRYLGASGSPRRLWWSPSLDTISSVGSWRGRSSKSPAHWNQVVSEAEKIVGYPTSFMSLRCLLSDELSNIAMQVRKLVGTQHPLLTTARGLVHDSWNSLQLRGLVVLLISKAAGPSSVNTSCQNYDMVSGIYSCQRSLAEITELIHIALLVHRGIVNLNELQSSDGPLKDMQFGNKIAILSGDFLLANACNGLALLQNTKVVELLASALMDLVQGVYHENSTSKESYITDDIGISTWKEQTFLSHGALLAKSCQAAMELAKHDAEVQNMAFQYGKHMAMSHKINSDVQPFIKEKTSDSMTFNLNSAPVVLHQEFLGRDLWIKQIGEAQEKGRLDYAKLRERIKAGKGVTSAIDLCRYHGNKALEALESFPPSEARSALENIVFAVTRFS</sequence>
<name>DLP1_HUMAN</name>
<feature type="chain" id="PRO_0000123978" description="All trans-polyprenyl-diphosphate synthase PDSS2">
    <location>
        <begin position="1"/>
        <end position="399"/>
    </location>
</feature>
<feature type="splice variant" id="VSP_017098" description="In isoform 2." evidence="5">
    <original>VVELLASALMDLVQGVYHENSTSKESYITD</original>
    <variation>SFSFNGPIAIYQMGDCESAWILSKHPRALS</variation>
    <location>
        <begin position="211"/>
        <end position="240"/>
    </location>
</feature>
<feature type="splice variant" id="VSP_017099" description="In isoform 2." evidence="5">
    <location>
        <begin position="241"/>
        <end position="399"/>
    </location>
</feature>
<feature type="sequence variant" id="VAR_049645" description="In dbSNP:rs3734675.">
    <original>F</original>
    <variation>L</variation>
    <location>
        <position position="3"/>
    </location>
</feature>
<feature type="sequence variant" id="VAR_055398" description="In COQ10D3; dbSNP:rs118203956." evidence="3">
    <original>S</original>
    <variation>L</variation>
    <location>
        <position position="382"/>
    </location>
</feature>
<feature type="sequence conflict" description="In Ref. 4; AAH39906." evidence="6" ref="4">
    <original>G</original>
    <variation>R</variation>
    <location>
        <position position="335"/>
    </location>
</feature>
<dbReference type="EC" id="2.5.1.91" evidence="2"/>
<dbReference type="EMBL" id="AB210839">
    <property type="protein sequence ID" value="BAE48217.1"/>
    <property type="molecule type" value="mRNA"/>
</dbReference>
<dbReference type="EMBL" id="AF254956">
    <property type="protein sequence ID" value="AAF97788.1"/>
    <property type="molecule type" value="mRNA"/>
</dbReference>
<dbReference type="EMBL" id="AL121957">
    <property type="status" value="NOT_ANNOTATED_CDS"/>
    <property type="molecule type" value="Genomic_DNA"/>
</dbReference>
<dbReference type="EMBL" id="AL355586">
    <property type="status" value="NOT_ANNOTATED_CDS"/>
    <property type="molecule type" value="Genomic_DNA"/>
</dbReference>
<dbReference type="EMBL" id="AL590489">
    <property type="status" value="NOT_ANNOTATED_CDS"/>
    <property type="molecule type" value="Genomic_DNA"/>
</dbReference>
<dbReference type="EMBL" id="AL591516">
    <property type="status" value="NOT_ANNOTATED_CDS"/>
    <property type="molecule type" value="Genomic_DNA"/>
</dbReference>
<dbReference type="EMBL" id="BC029491">
    <property type="protein sequence ID" value="AAH29491.1"/>
    <property type="status" value="ALT_FRAME"/>
    <property type="molecule type" value="mRNA"/>
</dbReference>
<dbReference type="EMBL" id="BC039906">
    <property type="protein sequence ID" value="AAH39906.1"/>
    <property type="molecule type" value="mRNA"/>
</dbReference>
<dbReference type="CCDS" id="CCDS5059.1">
    <molecule id="Q86YH6-1"/>
</dbReference>
<dbReference type="RefSeq" id="NP_065114.3">
    <molecule id="Q86YH6-1"/>
    <property type="nucleotide sequence ID" value="NM_020381.3"/>
</dbReference>
<dbReference type="RefSeq" id="XP_011534265.1">
    <molecule id="Q86YH6-2"/>
    <property type="nucleotide sequence ID" value="XM_011535963.4"/>
</dbReference>
<dbReference type="RefSeq" id="XP_054211951.1">
    <molecule id="Q86YH6-2"/>
    <property type="nucleotide sequence ID" value="XM_054355976.1"/>
</dbReference>
<dbReference type="SMR" id="Q86YH6"/>
<dbReference type="BioGRID" id="121373">
    <property type="interactions" value="29"/>
</dbReference>
<dbReference type="FunCoup" id="Q86YH6">
    <property type="interactions" value="1019"/>
</dbReference>
<dbReference type="IntAct" id="Q86YH6">
    <property type="interactions" value="17"/>
</dbReference>
<dbReference type="MINT" id="Q86YH6"/>
<dbReference type="STRING" id="9606.ENSP00000358033"/>
<dbReference type="GlyGen" id="Q86YH6">
    <property type="glycosylation" value="1 site, 1 O-linked glycan (1 site)"/>
</dbReference>
<dbReference type="iPTMnet" id="Q86YH6"/>
<dbReference type="PhosphoSitePlus" id="Q86YH6"/>
<dbReference type="SwissPalm" id="Q86YH6"/>
<dbReference type="BioMuta" id="PDSS2"/>
<dbReference type="DMDM" id="73620006"/>
<dbReference type="jPOST" id="Q86YH6"/>
<dbReference type="MassIVE" id="Q86YH6"/>
<dbReference type="PaxDb" id="9606-ENSP00000358033"/>
<dbReference type="PeptideAtlas" id="Q86YH6"/>
<dbReference type="ProteomicsDB" id="70415">
    <molecule id="Q86YH6-1"/>
</dbReference>
<dbReference type="ProteomicsDB" id="70416">
    <molecule id="Q86YH6-2"/>
</dbReference>
<dbReference type="Pumba" id="Q86YH6"/>
<dbReference type="Antibodypedia" id="32171">
    <property type="antibodies" value="323 antibodies from 24 providers"/>
</dbReference>
<dbReference type="DNASU" id="57107"/>
<dbReference type="Ensembl" id="ENST00000369031.4">
    <molecule id="Q86YH6-2"/>
    <property type="protein sequence ID" value="ENSP00000358027.4"/>
    <property type="gene ID" value="ENSG00000164494.12"/>
</dbReference>
<dbReference type="Ensembl" id="ENST00000369037.9">
    <molecule id="Q86YH6-1"/>
    <property type="protein sequence ID" value="ENSP00000358033.4"/>
    <property type="gene ID" value="ENSG00000164494.12"/>
</dbReference>
<dbReference type="GeneID" id="57107"/>
<dbReference type="KEGG" id="hsa:57107"/>
<dbReference type="MANE-Select" id="ENST00000369037.9">
    <property type="protein sequence ID" value="ENSP00000358033.4"/>
    <property type="RefSeq nucleotide sequence ID" value="NM_020381.4"/>
    <property type="RefSeq protein sequence ID" value="NP_065114.3"/>
</dbReference>
<dbReference type="UCSC" id="uc003prt.3">
    <molecule id="Q86YH6-1"/>
    <property type="organism name" value="human"/>
</dbReference>
<dbReference type="AGR" id="HGNC:23041"/>
<dbReference type="CTD" id="57107"/>
<dbReference type="DisGeNET" id="57107"/>
<dbReference type="GeneCards" id="PDSS2"/>
<dbReference type="GeneReviews" id="PDSS2"/>
<dbReference type="HGNC" id="HGNC:23041">
    <property type="gene designation" value="PDSS2"/>
</dbReference>
<dbReference type="HPA" id="ENSG00000164494">
    <property type="expression patterns" value="Low tissue specificity"/>
</dbReference>
<dbReference type="MalaCards" id="PDSS2"/>
<dbReference type="MIM" id="610564">
    <property type="type" value="gene"/>
</dbReference>
<dbReference type="MIM" id="614652">
    <property type="type" value="phenotype"/>
</dbReference>
<dbReference type="neXtProt" id="NX_Q86YH6"/>
<dbReference type="OpenTargets" id="ENSG00000164494"/>
<dbReference type="PharmGKB" id="PA134957167"/>
<dbReference type="VEuPathDB" id="HostDB:ENSG00000164494"/>
<dbReference type="eggNOG" id="KOG0776">
    <property type="taxonomic scope" value="Eukaryota"/>
</dbReference>
<dbReference type="GeneTree" id="ENSGT00940000153498"/>
<dbReference type="HOGENOM" id="CLU_014015_3_1_1"/>
<dbReference type="InParanoid" id="Q86YH6"/>
<dbReference type="OMA" id="YPTSYFS"/>
<dbReference type="OrthoDB" id="9983019at2759"/>
<dbReference type="PAN-GO" id="Q86YH6">
    <property type="GO annotations" value="4 GO annotations based on evolutionary models"/>
</dbReference>
<dbReference type="PhylomeDB" id="Q86YH6"/>
<dbReference type="TreeFam" id="TF354277"/>
<dbReference type="BioCyc" id="MetaCyc:HS15203-MONOMER"/>
<dbReference type="BRENDA" id="2.5.1.91">
    <property type="organism ID" value="2681"/>
</dbReference>
<dbReference type="PathwayCommons" id="Q86YH6"/>
<dbReference type="Reactome" id="R-HSA-2142789">
    <property type="pathway name" value="Ubiquinol biosynthesis"/>
</dbReference>
<dbReference type="SignaLink" id="Q86YH6"/>
<dbReference type="UniPathway" id="UPA00232"/>
<dbReference type="BioGRID-ORCS" id="57107">
    <property type="hits" value="108 hits in 1167 CRISPR screens"/>
</dbReference>
<dbReference type="ChiTaRS" id="PDSS2">
    <property type="organism name" value="human"/>
</dbReference>
<dbReference type="GeneWiki" id="PDSS2"/>
<dbReference type="GenomeRNAi" id="57107"/>
<dbReference type="Pharos" id="Q86YH6">
    <property type="development level" value="Tbio"/>
</dbReference>
<dbReference type="PRO" id="PR:Q86YH6"/>
<dbReference type="Proteomes" id="UP000005640">
    <property type="component" value="Chromosome 6"/>
</dbReference>
<dbReference type="RNAct" id="Q86YH6">
    <property type="molecule type" value="protein"/>
</dbReference>
<dbReference type="Bgee" id="ENSG00000164494">
    <property type="expression patterns" value="Expressed in buccal mucosa cell and 178 other cell types or tissues"/>
</dbReference>
<dbReference type="ExpressionAtlas" id="Q86YH6">
    <property type="expression patterns" value="baseline and differential"/>
</dbReference>
<dbReference type="GO" id="GO:0005829">
    <property type="term" value="C:cytosol"/>
    <property type="evidence" value="ECO:0000314"/>
    <property type="project" value="HPA"/>
</dbReference>
<dbReference type="GO" id="GO:0032478">
    <property type="term" value="C:heterotetrameric polyprenyl diphosphate synthase complex"/>
    <property type="evidence" value="ECO:0000314"/>
    <property type="project" value="BHF-UCL"/>
</dbReference>
<dbReference type="GO" id="GO:0005759">
    <property type="term" value="C:mitochondrial matrix"/>
    <property type="evidence" value="ECO:0000304"/>
    <property type="project" value="Reactome"/>
</dbReference>
<dbReference type="GO" id="GO:0005739">
    <property type="term" value="C:mitochondrion"/>
    <property type="evidence" value="ECO:0006056"/>
    <property type="project" value="FlyBase"/>
</dbReference>
<dbReference type="GO" id="GO:0032476">
    <property type="term" value="C:polyprenyl diphosphate synthase complex"/>
    <property type="evidence" value="ECO:0000318"/>
    <property type="project" value="GO_Central"/>
</dbReference>
<dbReference type="GO" id="GO:0110142">
    <property type="term" value="C:ubiquinone biosynthesis complex"/>
    <property type="evidence" value="ECO:0007669"/>
    <property type="project" value="Ensembl"/>
</dbReference>
<dbReference type="GO" id="GO:0097269">
    <property type="term" value="F:all-trans-decaprenyl-diphosphate synthase activity"/>
    <property type="evidence" value="ECO:0007669"/>
    <property type="project" value="UniProtKB-EC"/>
</dbReference>
<dbReference type="GO" id="GO:0052923">
    <property type="term" value="F:all-trans-nonaprenyl-diphosphate synthase (geranyl-diphosphate specific) activity"/>
    <property type="evidence" value="ECO:0007669"/>
    <property type="project" value="Ensembl"/>
</dbReference>
<dbReference type="GO" id="GO:0004659">
    <property type="term" value="F:prenyltransferase activity"/>
    <property type="evidence" value="ECO:0000318"/>
    <property type="project" value="GO_Central"/>
</dbReference>
<dbReference type="GO" id="GO:0046982">
    <property type="term" value="F:protein heterodimerization activity"/>
    <property type="evidence" value="ECO:0007669"/>
    <property type="project" value="Ensembl"/>
</dbReference>
<dbReference type="GO" id="GO:0021549">
    <property type="term" value="P:cerebellum development"/>
    <property type="evidence" value="ECO:0000250"/>
    <property type="project" value="UniProtKB"/>
</dbReference>
<dbReference type="GO" id="GO:0008299">
    <property type="term" value="P:isoprenoid biosynthetic process"/>
    <property type="evidence" value="ECO:0000314"/>
    <property type="project" value="HGNC-UCL"/>
</dbReference>
<dbReference type="GO" id="GO:0050878">
    <property type="term" value="P:regulation of body fluid levels"/>
    <property type="evidence" value="ECO:0007669"/>
    <property type="project" value="Ensembl"/>
</dbReference>
<dbReference type="GO" id="GO:0006744">
    <property type="term" value="P:ubiquinone biosynthetic process"/>
    <property type="evidence" value="ECO:0000314"/>
    <property type="project" value="HGNC-UCL"/>
</dbReference>
<dbReference type="FunFam" id="1.10.600.10:FF:000016">
    <property type="entry name" value="decaprenyl-diphosphate synthase subunit 2"/>
    <property type="match status" value="1"/>
</dbReference>
<dbReference type="Gene3D" id="1.10.600.10">
    <property type="entry name" value="Farnesyl Diphosphate Synthase"/>
    <property type="match status" value="1"/>
</dbReference>
<dbReference type="InterPro" id="IPR008949">
    <property type="entry name" value="Isoprenoid_synthase_dom_sf"/>
</dbReference>
<dbReference type="InterPro" id="IPR000092">
    <property type="entry name" value="Polyprenyl_synt"/>
</dbReference>
<dbReference type="PANTHER" id="PTHR12001:SF55">
    <property type="entry name" value="ALL TRANS-POLYPRENYL-DIPHOSPHATE SYNTHASE PDSS2"/>
    <property type="match status" value="1"/>
</dbReference>
<dbReference type="PANTHER" id="PTHR12001">
    <property type="entry name" value="GERANYLGERANYL PYROPHOSPHATE SYNTHASE"/>
    <property type="match status" value="1"/>
</dbReference>
<dbReference type="Pfam" id="PF00348">
    <property type="entry name" value="polyprenyl_synt"/>
    <property type="match status" value="1"/>
</dbReference>
<dbReference type="SUPFAM" id="SSF48576">
    <property type="entry name" value="Terpenoid synthases"/>
    <property type="match status" value="1"/>
</dbReference>
<keyword id="KW-0025">Alternative splicing</keyword>
<keyword id="KW-0225">Disease variant</keyword>
<keyword id="KW-0414">Isoprene biosynthesis</keyword>
<keyword id="KW-0443">Lipid metabolism</keyword>
<keyword id="KW-0496">Mitochondrion</keyword>
<keyword id="KW-1274">Primary mitochondrial disease</keyword>
<keyword id="KW-1267">Proteomics identification</keyword>
<keyword id="KW-1185">Reference proteome</keyword>
<keyword id="KW-0808">Transferase</keyword>
<keyword id="KW-0831">Ubiquinone biosynthesis</keyword>
<evidence type="ECO:0000250" key="1">
    <source>
        <dbReference type="UniProtKB" id="Q33DR3"/>
    </source>
</evidence>
<evidence type="ECO:0000269" key="2">
    <source>
    </source>
</evidence>
<evidence type="ECO:0000269" key="3">
    <source>
    </source>
</evidence>
<evidence type="ECO:0000269" key="4">
    <source>
    </source>
</evidence>
<evidence type="ECO:0000303" key="5">
    <source>
    </source>
</evidence>
<evidence type="ECO:0000305" key="6"/>
<evidence type="ECO:0000305" key="7">
    <source>
    </source>
</evidence>
<evidence type="ECO:0000312" key="8">
    <source>
        <dbReference type="HGNC" id="HGNC:23041"/>
    </source>
</evidence>
<gene>
    <name evidence="8" type="primary">PDSS2</name>
    <name type="synonym">C6orf210</name>
    <name type="synonym">DLP1</name>
</gene>
<reference key="1">
    <citation type="journal article" date="2005" name="FEBS J.">
        <title>Characterization of solanesyl and decaprenyl diphosphate synthases in mice and humans.</title>
        <authorList>
            <person name="Saiki R."/>
            <person name="Nagata A."/>
            <person name="Kainou T."/>
            <person name="Matsuda H."/>
            <person name="Kawamukai M."/>
        </authorList>
    </citation>
    <scope>NUCLEOTIDE SEQUENCE [MRNA] (ISOFORM 1)</scope>
    <scope>FUNCTION</scope>
    <scope>CATALYTIC ACTIVITY</scope>
    <scope>SUBUNIT</scope>
</reference>
<reference key="2">
    <citation type="submission" date="2000-08" db="EMBL/GenBank/DDBJ databases">
        <title>Characterization of a complex chromosome rearrangement involving 6q in a melanoma cell line: isolation of a candidate tumor suppressor gene interrupted by the breakpoint at 6q16.</title>
        <authorList>
            <person name="Guan X.-Y.Y."/>
            <person name="Zhou H."/>
            <person name="Sham J.S.T."/>
            <person name="Zhang H.-E."/>
            <person name="Trent J.M."/>
        </authorList>
    </citation>
    <scope>NUCLEOTIDE SEQUENCE [MRNA] (ISOFORM 1)</scope>
    <source>
        <tissue>Melanoma</tissue>
    </source>
</reference>
<reference key="3">
    <citation type="journal article" date="2003" name="Nature">
        <title>The DNA sequence and analysis of human chromosome 6.</title>
        <authorList>
            <person name="Mungall A.J."/>
            <person name="Palmer S.A."/>
            <person name="Sims S.K."/>
            <person name="Edwards C.A."/>
            <person name="Ashurst J.L."/>
            <person name="Wilming L."/>
            <person name="Jones M.C."/>
            <person name="Horton R."/>
            <person name="Hunt S.E."/>
            <person name="Scott C.E."/>
            <person name="Gilbert J.G.R."/>
            <person name="Clamp M.E."/>
            <person name="Bethel G."/>
            <person name="Milne S."/>
            <person name="Ainscough R."/>
            <person name="Almeida J.P."/>
            <person name="Ambrose K.D."/>
            <person name="Andrews T.D."/>
            <person name="Ashwell R.I.S."/>
            <person name="Babbage A.K."/>
            <person name="Bagguley C.L."/>
            <person name="Bailey J."/>
            <person name="Banerjee R."/>
            <person name="Barker D.J."/>
            <person name="Barlow K.F."/>
            <person name="Bates K."/>
            <person name="Beare D.M."/>
            <person name="Beasley H."/>
            <person name="Beasley O."/>
            <person name="Bird C.P."/>
            <person name="Blakey S.E."/>
            <person name="Bray-Allen S."/>
            <person name="Brook J."/>
            <person name="Brown A.J."/>
            <person name="Brown J.Y."/>
            <person name="Burford D.C."/>
            <person name="Burrill W."/>
            <person name="Burton J."/>
            <person name="Carder C."/>
            <person name="Carter N.P."/>
            <person name="Chapman J.C."/>
            <person name="Clark S.Y."/>
            <person name="Clark G."/>
            <person name="Clee C.M."/>
            <person name="Clegg S."/>
            <person name="Cobley V."/>
            <person name="Collier R.E."/>
            <person name="Collins J.E."/>
            <person name="Colman L.K."/>
            <person name="Corby N.R."/>
            <person name="Coville G.J."/>
            <person name="Culley K.M."/>
            <person name="Dhami P."/>
            <person name="Davies J."/>
            <person name="Dunn M."/>
            <person name="Earthrowl M.E."/>
            <person name="Ellington A.E."/>
            <person name="Evans K.A."/>
            <person name="Faulkner L."/>
            <person name="Francis M.D."/>
            <person name="Frankish A."/>
            <person name="Frankland J."/>
            <person name="French L."/>
            <person name="Garner P."/>
            <person name="Garnett J."/>
            <person name="Ghori M.J."/>
            <person name="Gilby L.M."/>
            <person name="Gillson C.J."/>
            <person name="Glithero R.J."/>
            <person name="Grafham D.V."/>
            <person name="Grant M."/>
            <person name="Gribble S."/>
            <person name="Griffiths C."/>
            <person name="Griffiths M.N.D."/>
            <person name="Hall R."/>
            <person name="Halls K.S."/>
            <person name="Hammond S."/>
            <person name="Harley J.L."/>
            <person name="Hart E.A."/>
            <person name="Heath P.D."/>
            <person name="Heathcott R."/>
            <person name="Holmes S.J."/>
            <person name="Howden P.J."/>
            <person name="Howe K.L."/>
            <person name="Howell G.R."/>
            <person name="Huckle E."/>
            <person name="Humphray S.J."/>
            <person name="Humphries M.D."/>
            <person name="Hunt A.R."/>
            <person name="Johnson C.M."/>
            <person name="Joy A.A."/>
            <person name="Kay M."/>
            <person name="Keenan S.J."/>
            <person name="Kimberley A.M."/>
            <person name="King A."/>
            <person name="Laird G.K."/>
            <person name="Langford C."/>
            <person name="Lawlor S."/>
            <person name="Leongamornlert D.A."/>
            <person name="Leversha M."/>
            <person name="Lloyd C.R."/>
            <person name="Lloyd D.M."/>
            <person name="Loveland J.E."/>
            <person name="Lovell J."/>
            <person name="Martin S."/>
            <person name="Mashreghi-Mohammadi M."/>
            <person name="Maslen G.L."/>
            <person name="Matthews L."/>
            <person name="McCann O.T."/>
            <person name="McLaren S.J."/>
            <person name="McLay K."/>
            <person name="McMurray A."/>
            <person name="Moore M.J.F."/>
            <person name="Mullikin J.C."/>
            <person name="Niblett D."/>
            <person name="Nickerson T."/>
            <person name="Novik K.L."/>
            <person name="Oliver K."/>
            <person name="Overton-Larty E.K."/>
            <person name="Parker A."/>
            <person name="Patel R."/>
            <person name="Pearce A.V."/>
            <person name="Peck A.I."/>
            <person name="Phillimore B.J.C.T."/>
            <person name="Phillips S."/>
            <person name="Plumb R.W."/>
            <person name="Porter K.M."/>
            <person name="Ramsey Y."/>
            <person name="Ranby S.A."/>
            <person name="Rice C.M."/>
            <person name="Ross M.T."/>
            <person name="Searle S.M."/>
            <person name="Sehra H.K."/>
            <person name="Sheridan E."/>
            <person name="Skuce C.D."/>
            <person name="Smith S."/>
            <person name="Smith M."/>
            <person name="Spraggon L."/>
            <person name="Squares S.L."/>
            <person name="Steward C.A."/>
            <person name="Sycamore N."/>
            <person name="Tamlyn-Hall G."/>
            <person name="Tester J."/>
            <person name="Theaker A.J."/>
            <person name="Thomas D.W."/>
            <person name="Thorpe A."/>
            <person name="Tracey A."/>
            <person name="Tromans A."/>
            <person name="Tubby B."/>
            <person name="Wall M."/>
            <person name="Wallis J.M."/>
            <person name="West A.P."/>
            <person name="White S.S."/>
            <person name="Whitehead S.L."/>
            <person name="Whittaker H."/>
            <person name="Wild A."/>
            <person name="Willey D.J."/>
            <person name="Wilmer T.E."/>
            <person name="Wood J.M."/>
            <person name="Wray P.W."/>
            <person name="Wyatt J.C."/>
            <person name="Young L."/>
            <person name="Younger R.M."/>
            <person name="Bentley D.R."/>
            <person name="Coulson A."/>
            <person name="Durbin R.M."/>
            <person name="Hubbard T."/>
            <person name="Sulston J.E."/>
            <person name="Dunham I."/>
            <person name="Rogers J."/>
            <person name="Beck S."/>
        </authorList>
    </citation>
    <scope>NUCLEOTIDE SEQUENCE [LARGE SCALE GENOMIC DNA]</scope>
</reference>
<reference key="4">
    <citation type="journal article" date="2004" name="Genome Res.">
        <title>The status, quality, and expansion of the NIH full-length cDNA project: the Mammalian Gene Collection (MGC).</title>
        <authorList>
            <consortium name="The MGC Project Team"/>
        </authorList>
    </citation>
    <scope>NUCLEOTIDE SEQUENCE [LARGE SCALE MRNA] (ISOFORMS 1 AND 2)</scope>
    <source>
        <tissue>Testis</tissue>
    </source>
</reference>
<reference key="5">
    <citation type="journal article" date="2011" name="BMC Syst. Biol.">
        <title>Initial characterization of the human central proteome.</title>
        <authorList>
            <person name="Burkard T.R."/>
            <person name="Planyavsky M."/>
            <person name="Kaupe I."/>
            <person name="Breitwieser F.P."/>
            <person name="Buerckstuemmer T."/>
            <person name="Bennett K.L."/>
            <person name="Superti-Furga G."/>
            <person name="Colinge J."/>
        </authorList>
    </citation>
    <scope>IDENTIFICATION BY MASS SPECTROMETRY [LARGE SCALE ANALYSIS]</scope>
</reference>
<reference key="6">
    <citation type="journal article" date="2015" name="Proteomics">
        <title>N-terminome analysis of the human mitochondrial proteome.</title>
        <authorList>
            <person name="Vaca Jacome A.S."/>
            <person name="Rabilloud T."/>
            <person name="Schaeffer-Reiss C."/>
            <person name="Rompais M."/>
            <person name="Ayoub D."/>
            <person name="Lane L."/>
            <person name="Bairoch A."/>
            <person name="Van Dorsselaer A."/>
            <person name="Carapito C."/>
        </authorList>
    </citation>
    <scope>IDENTIFICATION BY MASS SPECTROMETRY [LARGE SCALE ANALYSIS]</scope>
</reference>
<reference key="7">
    <citation type="journal article" date="2021" name="Cell Metab.">
        <title>Quantitative high-confidence human mitochondrial proteome and its dynamics in cellular context.</title>
        <authorList>
            <person name="Morgenstern M."/>
            <person name="Peikert C.D."/>
            <person name="Luebbert P."/>
            <person name="Suppanz I."/>
            <person name="Klemm C."/>
            <person name="Alka O."/>
            <person name="Steiert C."/>
            <person name="Naumenko N."/>
            <person name="Schendzielorz A."/>
            <person name="Melchionda L."/>
            <person name="Muehlhaeuser W.W.D."/>
            <person name="Knapp B."/>
            <person name="Busch J.D."/>
            <person name="Stiller S.B."/>
            <person name="Dannenmaier S."/>
            <person name="Lindau C."/>
            <person name="Licheva M."/>
            <person name="Eickhorst C."/>
            <person name="Galbusera R."/>
            <person name="Zerbes R.M."/>
            <person name="Ryan M.T."/>
            <person name="Kraft C."/>
            <person name="Kozjak-Pavlovic V."/>
            <person name="Drepper F."/>
            <person name="Dennerlein S."/>
            <person name="Oeljeklaus S."/>
            <person name="Pfanner N."/>
            <person name="Wiedemann N."/>
            <person name="Warscheid B."/>
        </authorList>
    </citation>
    <scope>SUBCELLULAR LOCATION</scope>
</reference>
<reference key="8">
    <citation type="journal article" date="2006" name="Am. J. Hum. Genet.">
        <title>Leigh syndrome with nephropathy and CoQ10 deficiency due to decaprenyl diphosphate synthase subunit 2 (PDSS2) mutations.</title>
        <authorList>
            <person name="Lopez L.C."/>
            <person name="Schuelke M."/>
            <person name="Quinzii C.M."/>
            <person name="Kanki T."/>
            <person name="Rodenburg R.J.T."/>
            <person name="Naini A."/>
            <person name="Dimauro S."/>
            <person name="Hirano M."/>
        </authorList>
    </citation>
    <scope>VARIANT COQ10D3 LEU-382</scope>
</reference>
<organism>
    <name type="scientific">Homo sapiens</name>
    <name type="common">Human</name>
    <dbReference type="NCBI Taxonomy" id="9606"/>
    <lineage>
        <taxon>Eukaryota</taxon>
        <taxon>Metazoa</taxon>
        <taxon>Chordata</taxon>
        <taxon>Craniata</taxon>
        <taxon>Vertebrata</taxon>
        <taxon>Euteleostomi</taxon>
        <taxon>Mammalia</taxon>
        <taxon>Eutheria</taxon>
        <taxon>Euarchontoglires</taxon>
        <taxon>Primates</taxon>
        <taxon>Haplorrhini</taxon>
        <taxon>Catarrhini</taxon>
        <taxon>Hominidae</taxon>
        <taxon>Homo</taxon>
    </lineage>
</organism>
<proteinExistence type="evidence at protein level"/>
<accession>Q86YH6</accession>
<accession>Q33DR4</accession>
<accession>Q4G158</accession>
<accession>Q5VU38</accession>
<accession>Q5VU39</accession>
<accession>Q9NR58</accession>